<organism>
    <name type="scientific">Xylella fastidiosa (strain 9a5c)</name>
    <dbReference type="NCBI Taxonomy" id="160492"/>
    <lineage>
        <taxon>Bacteria</taxon>
        <taxon>Pseudomonadati</taxon>
        <taxon>Pseudomonadota</taxon>
        <taxon>Gammaproteobacteria</taxon>
        <taxon>Lysobacterales</taxon>
        <taxon>Lysobacteraceae</taxon>
        <taxon>Xylella</taxon>
    </lineage>
</organism>
<protein>
    <recommendedName>
        <fullName>DNA replication and repair protein RecF</fullName>
    </recommendedName>
</protein>
<accession>Q9PHE1</accession>
<keyword id="KW-0067">ATP-binding</keyword>
<keyword id="KW-0963">Cytoplasm</keyword>
<keyword id="KW-0227">DNA damage</keyword>
<keyword id="KW-0234">DNA repair</keyword>
<keyword id="KW-0235">DNA replication</keyword>
<keyword id="KW-0238">DNA-binding</keyword>
<keyword id="KW-0547">Nucleotide-binding</keyword>
<keyword id="KW-0742">SOS response</keyword>
<feature type="chain" id="PRO_0000196491" description="DNA replication and repair protein RecF">
    <location>
        <begin position="1"/>
        <end position="364"/>
    </location>
</feature>
<feature type="binding site" evidence="2">
    <location>
        <begin position="30"/>
        <end position="37"/>
    </location>
    <ligand>
        <name>ATP</name>
        <dbReference type="ChEBI" id="CHEBI:30616"/>
    </ligand>
</feature>
<sequence>MHITQLVLRHFRCFDAVDFFPLPGLNFFIGENGSGKTSLLEAVHLMGYGRSFRGRVRDGLIRHGSENLEIFVDWQETDLINARRRRAGLSHYGQEWIGRLDGQKIMHLATLCAALAVITFESSSYQLINSNAELRRRFLDWGLFHVEPDFLDLWRCYTHVLKQRNSLLKQKEELAMLEAWDQKLSEVGEQLTFRRFQYLERLKQRVIPLISRITPNLKIHGLNFNHGWRRHELPLIDALFISRERDYQYGYTSLGPHRSDWTPQFASIPGVHVLSRGQGKLITLMCLLAQAQDFFDQRGEWPILALDDLASELDQKHQWRVLEMLAEIPAQVLITGTEIPQGLKPYFSVGAMFHVEHGAITRMF</sequence>
<gene>
    <name type="primary">recF</name>
    <name type="ordered locus">XF_0003</name>
</gene>
<reference key="1">
    <citation type="journal article" date="2000" name="Nature">
        <title>The genome sequence of the plant pathogen Xylella fastidiosa.</title>
        <authorList>
            <person name="Simpson A.J.G."/>
            <person name="Reinach F.C."/>
            <person name="Arruda P."/>
            <person name="Abreu F.A."/>
            <person name="Acencio M."/>
            <person name="Alvarenga R."/>
            <person name="Alves L.M.C."/>
            <person name="Araya J.E."/>
            <person name="Baia G.S."/>
            <person name="Baptista C.S."/>
            <person name="Barros M.H."/>
            <person name="Bonaccorsi E.D."/>
            <person name="Bordin S."/>
            <person name="Bove J.M."/>
            <person name="Briones M.R.S."/>
            <person name="Bueno M.R.P."/>
            <person name="Camargo A.A."/>
            <person name="Camargo L.E.A."/>
            <person name="Carraro D.M."/>
            <person name="Carrer H."/>
            <person name="Colauto N.B."/>
            <person name="Colombo C."/>
            <person name="Costa F.F."/>
            <person name="Costa M.C.R."/>
            <person name="Costa-Neto C.M."/>
            <person name="Coutinho L.L."/>
            <person name="Cristofani M."/>
            <person name="Dias-Neto E."/>
            <person name="Docena C."/>
            <person name="El-Dorry H."/>
            <person name="Facincani A.P."/>
            <person name="Ferreira A.J.S."/>
            <person name="Ferreira V.C.A."/>
            <person name="Ferro J.A."/>
            <person name="Fraga J.S."/>
            <person name="Franca S.C."/>
            <person name="Franco M.C."/>
            <person name="Frohme M."/>
            <person name="Furlan L.R."/>
            <person name="Garnier M."/>
            <person name="Goldman G.H."/>
            <person name="Goldman M.H.S."/>
            <person name="Gomes S.L."/>
            <person name="Gruber A."/>
            <person name="Ho P.L."/>
            <person name="Hoheisel J.D."/>
            <person name="Junqueira M.L."/>
            <person name="Kemper E.L."/>
            <person name="Kitajima J.P."/>
            <person name="Krieger J.E."/>
            <person name="Kuramae E.E."/>
            <person name="Laigret F."/>
            <person name="Lambais M.R."/>
            <person name="Leite L.C.C."/>
            <person name="Lemos E.G.M."/>
            <person name="Lemos M.V.F."/>
            <person name="Lopes S.A."/>
            <person name="Lopes C.R."/>
            <person name="Machado J.A."/>
            <person name="Machado M.A."/>
            <person name="Madeira A.M.B.N."/>
            <person name="Madeira H.M.F."/>
            <person name="Marino C.L."/>
            <person name="Marques M.V."/>
            <person name="Martins E.A.L."/>
            <person name="Martins E.M.F."/>
            <person name="Matsukuma A.Y."/>
            <person name="Menck C.F.M."/>
            <person name="Miracca E.C."/>
            <person name="Miyaki C.Y."/>
            <person name="Monteiro-Vitorello C.B."/>
            <person name="Moon D.H."/>
            <person name="Nagai M.A."/>
            <person name="Nascimento A.L.T.O."/>
            <person name="Netto L.E.S."/>
            <person name="Nhani A. Jr."/>
            <person name="Nobrega F.G."/>
            <person name="Nunes L.R."/>
            <person name="Oliveira M.A."/>
            <person name="de Oliveira M.C."/>
            <person name="de Oliveira R.C."/>
            <person name="Palmieri D.A."/>
            <person name="Paris A."/>
            <person name="Peixoto B.R."/>
            <person name="Pereira G.A.G."/>
            <person name="Pereira H.A. Jr."/>
            <person name="Pesquero J.B."/>
            <person name="Quaggio R.B."/>
            <person name="Roberto P.G."/>
            <person name="Rodrigues V."/>
            <person name="de Rosa A.J.M."/>
            <person name="de Rosa V.E. Jr."/>
            <person name="de Sa R.G."/>
            <person name="Santelli R.V."/>
            <person name="Sawasaki H.E."/>
            <person name="da Silva A.C.R."/>
            <person name="da Silva A.M."/>
            <person name="da Silva F.R."/>
            <person name="Silva W.A. Jr."/>
            <person name="da Silveira J.F."/>
            <person name="Silvestri M.L.Z."/>
            <person name="Siqueira W.J."/>
            <person name="de Souza A.A."/>
            <person name="de Souza A.P."/>
            <person name="Terenzi M.F."/>
            <person name="Truffi D."/>
            <person name="Tsai S.M."/>
            <person name="Tsuhako M.H."/>
            <person name="Vallada H."/>
            <person name="Van Sluys M.A."/>
            <person name="Verjovski-Almeida S."/>
            <person name="Vettore A.L."/>
            <person name="Zago M.A."/>
            <person name="Zatz M."/>
            <person name="Meidanis J."/>
            <person name="Setubal J.C."/>
        </authorList>
    </citation>
    <scope>NUCLEOTIDE SEQUENCE [LARGE SCALE GENOMIC DNA]</scope>
    <source>
        <strain>9a5c</strain>
    </source>
</reference>
<dbReference type="EMBL" id="AE003849">
    <property type="protein sequence ID" value="AAF82816.1"/>
    <property type="molecule type" value="Genomic_DNA"/>
</dbReference>
<dbReference type="PIR" id="A82860">
    <property type="entry name" value="A82860"/>
</dbReference>
<dbReference type="RefSeq" id="WP_010892552.1">
    <property type="nucleotide sequence ID" value="NC_002488.3"/>
</dbReference>
<dbReference type="SMR" id="Q9PHE1"/>
<dbReference type="STRING" id="160492.XF_0003"/>
<dbReference type="KEGG" id="xfa:XF_0003"/>
<dbReference type="eggNOG" id="COG1195">
    <property type="taxonomic scope" value="Bacteria"/>
</dbReference>
<dbReference type="HOGENOM" id="CLU_040267_0_0_6"/>
<dbReference type="Proteomes" id="UP000000812">
    <property type="component" value="Chromosome"/>
</dbReference>
<dbReference type="GO" id="GO:0005737">
    <property type="term" value="C:cytoplasm"/>
    <property type="evidence" value="ECO:0007669"/>
    <property type="project" value="UniProtKB-SubCell"/>
</dbReference>
<dbReference type="GO" id="GO:0005524">
    <property type="term" value="F:ATP binding"/>
    <property type="evidence" value="ECO:0007669"/>
    <property type="project" value="UniProtKB-UniRule"/>
</dbReference>
<dbReference type="GO" id="GO:0003697">
    <property type="term" value="F:single-stranded DNA binding"/>
    <property type="evidence" value="ECO:0007669"/>
    <property type="project" value="UniProtKB-UniRule"/>
</dbReference>
<dbReference type="GO" id="GO:0006260">
    <property type="term" value="P:DNA replication"/>
    <property type="evidence" value="ECO:0007669"/>
    <property type="project" value="UniProtKB-UniRule"/>
</dbReference>
<dbReference type="GO" id="GO:0000731">
    <property type="term" value="P:DNA synthesis involved in DNA repair"/>
    <property type="evidence" value="ECO:0007669"/>
    <property type="project" value="TreeGrafter"/>
</dbReference>
<dbReference type="GO" id="GO:0006302">
    <property type="term" value="P:double-strand break repair"/>
    <property type="evidence" value="ECO:0007669"/>
    <property type="project" value="TreeGrafter"/>
</dbReference>
<dbReference type="GO" id="GO:0009432">
    <property type="term" value="P:SOS response"/>
    <property type="evidence" value="ECO:0007669"/>
    <property type="project" value="UniProtKB-UniRule"/>
</dbReference>
<dbReference type="Gene3D" id="3.40.50.300">
    <property type="entry name" value="P-loop containing nucleotide triphosphate hydrolases"/>
    <property type="match status" value="1"/>
</dbReference>
<dbReference type="Gene3D" id="1.20.1050.90">
    <property type="entry name" value="RecF/RecN/SMC, N-terminal domain"/>
    <property type="match status" value="1"/>
</dbReference>
<dbReference type="HAMAP" id="MF_00365">
    <property type="entry name" value="RecF"/>
    <property type="match status" value="1"/>
</dbReference>
<dbReference type="InterPro" id="IPR001238">
    <property type="entry name" value="DNA-binding_RecF"/>
</dbReference>
<dbReference type="InterPro" id="IPR018078">
    <property type="entry name" value="DNA-binding_RecF_CS"/>
</dbReference>
<dbReference type="InterPro" id="IPR027417">
    <property type="entry name" value="P-loop_NTPase"/>
</dbReference>
<dbReference type="InterPro" id="IPR003395">
    <property type="entry name" value="RecF/RecN/SMC_N"/>
</dbReference>
<dbReference type="InterPro" id="IPR042174">
    <property type="entry name" value="RecF_2"/>
</dbReference>
<dbReference type="NCBIfam" id="TIGR00611">
    <property type="entry name" value="recf"/>
    <property type="match status" value="1"/>
</dbReference>
<dbReference type="PANTHER" id="PTHR32182">
    <property type="entry name" value="DNA REPLICATION AND REPAIR PROTEIN RECF"/>
    <property type="match status" value="1"/>
</dbReference>
<dbReference type="PANTHER" id="PTHR32182:SF0">
    <property type="entry name" value="DNA REPLICATION AND REPAIR PROTEIN RECF"/>
    <property type="match status" value="1"/>
</dbReference>
<dbReference type="Pfam" id="PF02463">
    <property type="entry name" value="SMC_N"/>
    <property type="match status" value="1"/>
</dbReference>
<dbReference type="SUPFAM" id="SSF52540">
    <property type="entry name" value="P-loop containing nucleoside triphosphate hydrolases"/>
    <property type="match status" value="1"/>
</dbReference>
<dbReference type="PROSITE" id="PS00617">
    <property type="entry name" value="RECF_1"/>
    <property type="match status" value="1"/>
</dbReference>
<dbReference type="PROSITE" id="PS00618">
    <property type="entry name" value="RECF_2"/>
    <property type="match status" value="1"/>
</dbReference>
<name>RECF_XYLFA</name>
<evidence type="ECO:0000250" key="1"/>
<evidence type="ECO:0000255" key="2"/>
<evidence type="ECO:0000305" key="3"/>
<comment type="function">
    <text evidence="1">The RecF protein is involved in DNA metabolism; it is required for DNA replication and normal SOS inducibility. RecF binds preferentially to single-stranded, linear DNA. It also seems to bind ATP (By similarity).</text>
</comment>
<comment type="subcellular location">
    <subcellularLocation>
        <location evidence="1">Cytoplasm</location>
    </subcellularLocation>
</comment>
<comment type="similarity">
    <text evidence="3">Belongs to the RecF family.</text>
</comment>
<proteinExistence type="inferred from homology"/>